<comment type="function">
    <text evidence="1">Involved in the binding of tRNA to the ribosomes.</text>
</comment>
<comment type="subunit">
    <text evidence="1">Part of the 30S ribosomal subunit.</text>
</comment>
<comment type="similarity">
    <text evidence="1">Belongs to the universal ribosomal protein uS10 family.</text>
</comment>
<protein>
    <recommendedName>
        <fullName evidence="1">Small ribosomal subunit protein uS10</fullName>
    </recommendedName>
    <alternativeName>
        <fullName evidence="2">30S ribosomal protein S10</fullName>
    </alternativeName>
</protein>
<organism>
    <name type="scientific">Salmonella paratyphi C (strain RKS4594)</name>
    <dbReference type="NCBI Taxonomy" id="476213"/>
    <lineage>
        <taxon>Bacteria</taxon>
        <taxon>Pseudomonadati</taxon>
        <taxon>Pseudomonadota</taxon>
        <taxon>Gammaproteobacteria</taxon>
        <taxon>Enterobacterales</taxon>
        <taxon>Enterobacteriaceae</taxon>
        <taxon>Salmonella</taxon>
    </lineage>
</organism>
<name>RS10_SALPC</name>
<evidence type="ECO:0000255" key="1">
    <source>
        <dbReference type="HAMAP-Rule" id="MF_00508"/>
    </source>
</evidence>
<evidence type="ECO:0000305" key="2"/>
<feature type="chain" id="PRO_1000146074" description="Small ribosomal subunit protein uS10">
    <location>
        <begin position="1"/>
        <end position="103"/>
    </location>
</feature>
<keyword id="KW-0687">Ribonucleoprotein</keyword>
<keyword id="KW-0689">Ribosomal protein</keyword>
<sequence>MQNQRIRIRLKAFDHRLIDQSTAEIVETAKRTGAQVRGPIPLPTRKERFTVLISPHVNKDARDQYEIRTHKRLVDIVEPTEKTVDALMRLDLAAGVDVQISLG</sequence>
<proteinExistence type="inferred from homology"/>
<accession>C0Q0B7</accession>
<gene>
    <name evidence="1" type="primary">rpsJ</name>
    <name type="ordered locus">SPC_3510</name>
</gene>
<reference key="1">
    <citation type="journal article" date="2009" name="PLoS ONE">
        <title>Salmonella paratyphi C: genetic divergence from Salmonella choleraesuis and pathogenic convergence with Salmonella typhi.</title>
        <authorList>
            <person name="Liu W.-Q."/>
            <person name="Feng Y."/>
            <person name="Wang Y."/>
            <person name="Zou Q.-H."/>
            <person name="Chen F."/>
            <person name="Guo J.-T."/>
            <person name="Peng Y.-H."/>
            <person name="Jin Y."/>
            <person name="Li Y.-G."/>
            <person name="Hu S.-N."/>
            <person name="Johnston R.N."/>
            <person name="Liu G.-R."/>
            <person name="Liu S.-L."/>
        </authorList>
    </citation>
    <scope>NUCLEOTIDE SEQUENCE [LARGE SCALE GENOMIC DNA]</scope>
    <source>
        <strain>RKS4594</strain>
    </source>
</reference>
<dbReference type="EMBL" id="CP000857">
    <property type="protein sequence ID" value="ACN47594.1"/>
    <property type="molecule type" value="Genomic_DNA"/>
</dbReference>
<dbReference type="RefSeq" id="WP_001181005.1">
    <property type="nucleotide sequence ID" value="NC_012125.1"/>
</dbReference>
<dbReference type="SMR" id="C0Q0B7"/>
<dbReference type="GeneID" id="98390443"/>
<dbReference type="KEGG" id="sei:SPC_3510"/>
<dbReference type="HOGENOM" id="CLU_122625_1_3_6"/>
<dbReference type="Proteomes" id="UP000001599">
    <property type="component" value="Chromosome"/>
</dbReference>
<dbReference type="GO" id="GO:1990904">
    <property type="term" value="C:ribonucleoprotein complex"/>
    <property type="evidence" value="ECO:0007669"/>
    <property type="project" value="UniProtKB-KW"/>
</dbReference>
<dbReference type="GO" id="GO:0005840">
    <property type="term" value="C:ribosome"/>
    <property type="evidence" value="ECO:0007669"/>
    <property type="project" value="UniProtKB-KW"/>
</dbReference>
<dbReference type="GO" id="GO:0003735">
    <property type="term" value="F:structural constituent of ribosome"/>
    <property type="evidence" value="ECO:0007669"/>
    <property type="project" value="InterPro"/>
</dbReference>
<dbReference type="GO" id="GO:0000049">
    <property type="term" value="F:tRNA binding"/>
    <property type="evidence" value="ECO:0007669"/>
    <property type="project" value="UniProtKB-UniRule"/>
</dbReference>
<dbReference type="GO" id="GO:0006412">
    <property type="term" value="P:translation"/>
    <property type="evidence" value="ECO:0007669"/>
    <property type="project" value="UniProtKB-UniRule"/>
</dbReference>
<dbReference type="FunFam" id="3.30.70.600:FF:000001">
    <property type="entry name" value="30S ribosomal protein S10"/>
    <property type="match status" value="1"/>
</dbReference>
<dbReference type="Gene3D" id="3.30.70.600">
    <property type="entry name" value="Ribosomal protein S10 domain"/>
    <property type="match status" value="1"/>
</dbReference>
<dbReference type="HAMAP" id="MF_00508">
    <property type="entry name" value="Ribosomal_uS10"/>
    <property type="match status" value="1"/>
</dbReference>
<dbReference type="InterPro" id="IPR001848">
    <property type="entry name" value="Ribosomal_uS10"/>
</dbReference>
<dbReference type="InterPro" id="IPR018268">
    <property type="entry name" value="Ribosomal_uS10_CS"/>
</dbReference>
<dbReference type="InterPro" id="IPR027486">
    <property type="entry name" value="Ribosomal_uS10_dom"/>
</dbReference>
<dbReference type="InterPro" id="IPR036838">
    <property type="entry name" value="Ribosomal_uS10_dom_sf"/>
</dbReference>
<dbReference type="NCBIfam" id="NF001861">
    <property type="entry name" value="PRK00596.1"/>
    <property type="match status" value="1"/>
</dbReference>
<dbReference type="NCBIfam" id="TIGR01049">
    <property type="entry name" value="rpsJ_bact"/>
    <property type="match status" value="1"/>
</dbReference>
<dbReference type="PANTHER" id="PTHR11700">
    <property type="entry name" value="30S RIBOSOMAL PROTEIN S10 FAMILY MEMBER"/>
    <property type="match status" value="1"/>
</dbReference>
<dbReference type="Pfam" id="PF00338">
    <property type="entry name" value="Ribosomal_S10"/>
    <property type="match status" value="1"/>
</dbReference>
<dbReference type="PRINTS" id="PR00971">
    <property type="entry name" value="RIBOSOMALS10"/>
</dbReference>
<dbReference type="SMART" id="SM01403">
    <property type="entry name" value="Ribosomal_S10"/>
    <property type="match status" value="1"/>
</dbReference>
<dbReference type="SUPFAM" id="SSF54999">
    <property type="entry name" value="Ribosomal protein S10"/>
    <property type="match status" value="1"/>
</dbReference>
<dbReference type="PROSITE" id="PS00361">
    <property type="entry name" value="RIBOSOMAL_S10"/>
    <property type="match status" value="1"/>
</dbReference>